<accession>Q55FC4</accession>
<protein>
    <recommendedName>
        <fullName>HssA/B-like protein 7</fullName>
    </recommendedName>
</protein>
<organism>
    <name type="scientific">Dictyostelium discoideum</name>
    <name type="common">Social amoeba</name>
    <dbReference type="NCBI Taxonomy" id="44689"/>
    <lineage>
        <taxon>Eukaryota</taxon>
        <taxon>Amoebozoa</taxon>
        <taxon>Evosea</taxon>
        <taxon>Eumycetozoa</taxon>
        <taxon>Dictyostelia</taxon>
        <taxon>Dictyosteliales</taxon>
        <taxon>Dictyosteliaceae</taxon>
        <taxon>Dictyostelium</taxon>
    </lineage>
</organism>
<feature type="chain" id="PRO_0000330377" description="HssA/B-like protein 7">
    <location>
        <begin position="1"/>
        <end position="87"/>
    </location>
</feature>
<feature type="region of interest" description="Disordered" evidence="1">
    <location>
        <begin position="1"/>
        <end position="23"/>
    </location>
</feature>
<feature type="compositionally biased region" description="Polar residues" evidence="1">
    <location>
        <begin position="1"/>
        <end position="22"/>
    </location>
</feature>
<sequence length="87" mass="8759">MSILSALTSISNPMKSTKSSVANGGGRLSMGTNSVACGSCGGGNSSSGTINNADGSQTTYYSYTSPVYTYNYSYSYSSSGSSSCGCH</sequence>
<reference key="1">
    <citation type="journal article" date="2005" name="Nature">
        <title>The genome of the social amoeba Dictyostelium discoideum.</title>
        <authorList>
            <person name="Eichinger L."/>
            <person name="Pachebat J.A."/>
            <person name="Gloeckner G."/>
            <person name="Rajandream M.A."/>
            <person name="Sucgang R."/>
            <person name="Berriman M."/>
            <person name="Song J."/>
            <person name="Olsen R."/>
            <person name="Szafranski K."/>
            <person name="Xu Q."/>
            <person name="Tunggal B."/>
            <person name="Kummerfeld S."/>
            <person name="Madera M."/>
            <person name="Konfortov B.A."/>
            <person name="Rivero F."/>
            <person name="Bankier A.T."/>
            <person name="Lehmann R."/>
            <person name="Hamlin N."/>
            <person name="Davies R."/>
            <person name="Gaudet P."/>
            <person name="Fey P."/>
            <person name="Pilcher K."/>
            <person name="Chen G."/>
            <person name="Saunders D."/>
            <person name="Sodergren E.J."/>
            <person name="Davis P."/>
            <person name="Kerhornou A."/>
            <person name="Nie X."/>
            <person name="Hall N."/>
            <person name="Anjard C."/>
            <person name="Hemphill L."/>
            <person name="Bason N."/>
            <person name="Farbrother P."/>
            <person name="Desany B."/>
            <person name="Just E."/>
            <person name="Morio T."/>
            <person name="Rost R."/>
            <person name="Churcher C.M."/>
            <person name="Cooper J."/>
            <person name="Haydock S."/>
            <person name="van Driessche N."/>
            <person name="Cronin A."/>
            <person name="Goodhead I."/>
            <person name="Muzny D.M."/>
            <person name="Mourier T."/>
            <person name="Pain A."/>
            <person name="Lu M."/>
            <person name="Harper D."/>
            <person name="Lindsay R."/>
            <person name="Hauser H."/>
            <person name="James K.D."/>
            <person name="Quiles M."/>
            <person name="Madan Babu M."/>
            <person name="Saito T."/>
            <person name="Buchrieser C."/>
            <person name="Wardroper A."/>
            <person name="Felder M."/>
            <person name="Thangavelu M."/>
            <person name="Johnson D."/>
            <person name="Knights A."/>
            <person name="Loulseged H."/>
            <person name="Mungall K.L."/>
            <person name="Oliver K."/>
            <person name="Price C."/>
            <person name="Quail M.A."/>
            <person name="Urushihara H."/>
            <person name="Hernandez J."/>
            <person name="Rabbinowitsch E."/>
            <person name="Steffen D."/>
            <person name="Sanders M."/>
            <person name="Ma J."/>
            <person name="Kohara Y."/>
            <person name="Sharp S."/>
            <person name="Simmonds M.N."/>
            <person name="Spiegler S."/>
            <person name="Tivey A."/>
            <person name="Sugano S."/>
            <person name="White B."/>
            <person name="Walker D."/>
            <person name="Woodward J.R."/>
            <person name="Winckler T."/>
            <person name="Tanaka Y."/>
            <person name="Shaulsky G."/>
            <person name="Schleicher M."/>
            <person name="Weinstock G.M."/>
            <person name="Rosenthal A."/>
            <person name="Cox E.C."/>
            <person name="Chisholm R.L."/>
            <person name="Gibbs R.A."/>
            <person name="Loomis W.F."/>
            <person name="Platzer M."/>
            <person name="Kay R.R."/>
            <person name="Williams J.G."/>
            <person name="Dear P.H."/>
            <person name="Noegel A.A."/>
            <person name="Barrell B.G."/>
            <person name="Kuspa A."/>
        </authorList>
    </citation>
    <scope>NUCLEOTIDE SEQUENCE [LARGE SCALE GENOMIC DNA]</scope>
    <source>
        <strain>AX4</strain>
    </source>
</reference>
<name>HSL7_DICDI</name>
<keyword id="KW-1185">Reference proteome</keyword>
<comment type="similarity">
    <text evidence="2">Belongs to the hssA/B family.</text>
</comment>
<evidence type="ECO:0000256" key="1">
    <source>
        <dbReference type="SAM" id="MobiDB-lite"/>
    </source>
</evidence>
<evidence type="ECO:0000305" key="2"/>
<gene>
    <name type="primary">hssl7</name>
    <name type="ORF">DDB_G0268172</name>
</gene>
<dbReference type="EMBL" id="AAFI02000003">
    <property type="protein sequence ID" value="EAL73539.1"/>
    <property type="molecule type" value="Genomic_DNA"/>
</dbReference>
<dbReference type="RefSeq" id="XP_647609.1">
    <property type="nucleotide sequence ID" value="XM_642517.1"/>
</dbReference>
<dbReference type="FunCoup" id="Q55FC4">
    <property type="interactions" value="243"/>
</dbReference>
<dbReference type="PaxDb" id="44689-DDB0252795"/>
<dbReference type="EnsemblProtists" id="EAL73539">
    <property type="protein sequence ID" value="EAL73539"/>
    <property type="gene ID" value="DDB_G0268172"/>
</dbReference>
<dbReference type="GeneID" id="8616421"/>
<dbReference type="KEGG" id="ddi:DDB_G0268172"/>
<dbReference type="dictyBase" id="DDB_G0268172"/>
<dbReference type="HOGENOM" id="CLU_181850_1_0_1"/>
<dbReference type="InParanoid" id="Q55FC4"/>
<dbReference type="PhylomeDB" id="Q55FC4"/>
<dbReference type="PRO" id="PR:Q55FC4"/>
<dbReference type="Proteomes" id="UP000002195">
    <property type="component" value="Chromosome 1"/>
</dbReference>
<dbReference type="GO" id="GO:0030587">
    <property type="term" value="P:sorocarp development"/>
    <property type="evidence" value="ECO:0000318"/>
    <property type="project" value="GO_Central"/>
</dbReference>
<dbReference type="InterPro" id="IPR050533">
    <property type="entry name" value="HssA/B-like_chaperone"/>
</dbReference>
<dbReference type="InterPro" id="IPR008455">
    <property type="entry name" value="HssA/B-related"/>
</dbReference>
<dbReference type="PANTHER" id="PTHR31059">
    <property type="entry name" value="HSSA/B-LIKE PROTEIN 1-RELATED-RELATED"/>
    <property type="match status" value="1"/>
</dbReference>
<dbReference type="PANTHER" id="PTHR31059:SF5">
    <property type="entry name" value="HSSA_B-LIKE PROTEIN 1-RELATED"/>
    <property type="match status" value="1"/>
</dbReference>
<dbReference type="Pfam" id="PF05710">
    <property type="entry name" value="Coiled"/>
    <property type="match status" value="1"/>
</dbReference>
<proteinExistence type="inferred from homology"/>